<organism>
    <name type="scientific">Xylella fastidiosa (strain 9a5c)</name>
    <dbReference type="NCBI Taxonomy" id="160492"/>
    <lineage>
        <taxon>Bacteria</taxon>
        <taxon>Pseudomonadati</taxon>
        <taxon>Pseudomonadota</taxon>
        <taxon>Gammaproteobacteria</taxon>
        <taxon>Lysobacterales</taxon>
        <taxon>Lysobacteraceae</taxon>
        <taxon>Xylella</taxon>
    </lineage>
</organism>
<protein>
    <recommendedName>
        <fullName evidence="1">tRNA dimethylallyltransferase</fullName>
        <ecNumber evidence="1">2.5.1.75</ecNumber>
    </recommendedName>
    <alternativeName>
        <fullName evidence="1">Dimethylallyl diphosphate:tRNA dimethylallyltransferase</fullName>
        <shortName evidence="1">DMAPP:tRNA dimethylallyltransferase</shortName>
        <shortName evidence="1">DMATase</shortName>
    </alternativeName>
    <alternativeName>
        <fullName evidence="1">Isopentenyl-diphosphate:tRNA isopentenyltransferase</fullName>
        <shortName evidence="1">IPP transferase</shortName>
        <shortName evidence="1">IPPT</shortName>
        <shortName evidence="1">IPTase</shortName>
    </alternativeName>
</protein>
<feature type="chain" id="PRO_0000164009" description="tRNA dimethylallyltransferase">
    <location>
        <begin position="1"/>
        <end position="317"/>
    </location>
</feature>
<feature type="region of interest" description="Interaction with substrate tRNA" evidence="1">
    <location>
        <begin position="39"/>
        <end position="42"/>
    </location>
</feature>
<feature type="region of interest" description="Interaction with substrate tRNA" evidence="1">
    <location>
        <begin position="163"/>
        <end position="167"/>
    </location>
</feature>
<feature type="binding site" evidence="1">
    <location>
        <begin position="14"/>
        <end position="21"/>
    </location>
    <ligand>
        <name>ATP</name>
        <dbReference type="ChEBI" id="CHEBI:30616"/>
    </ligand>
</feature>
<feature type="binding site" evidence="1">
    <location>
        <begin position="16"/>
        <end position="21"/>
    </location>
    <ligand>
        <name>substrate</name>
    </ligand>
</feature>
<feature type="site" description="Interaction with substrate tRNA" evidence="1">
    <location>
        <position position="105"/>
    </location>
</feature>
<feature type="site" description="Interaction with substrate tRNA" evidence="1">
    <location>
        <position position="127"/>
    </location>
</feature>
<sequence>MPADTRPAAIVLMGPTASGKSQLAIDIAKRWGGEVISVDSVLVYRGLDIGTAKPNAAMRASVPHHLIDICEPWETYSAADFAHDARAAIDMIVRRGALPILTGGTGLYFRALLAGLSDMPPAHPEIRAMITAEAKRDSWATLHTRLAEVDAITAARIHATDPQRIQRALEVYRVSGRSMSDWQKQPLKQRLPLRVLKLVLAPTHRKVLHFRIAQRFKAMLDNGLLAEVNALRTHPSIHAMARPLNLPAMRAVGYRQCWEHLDNMYTAETLYQRGVAATRQLAKRQLTWLRGELDALWFDPEHDQSRIEKVVEAFLNR</sequence>
<comment type="function">
    <text evidence="1">Catalyzes the transfer of a dimethylallyl group onto the adenine at position 37 in tRNAs that read codons beginning with uridine, leading to the formation of N6-(dimethylallyl)adenosine (i(6)A).</text>
</comment>
<comment type="catalytic activity">
    <reaction evidence="1">
        <text>adenosine(37) in tRNA + dimethylallyl diphosphate = N(6)-dimethylallyladenosine(37) in tRNA + diphosphate</text>
        <dbReference type="Rhea" id="RHEA:26482"/>
        <dbReference type="Rhea" id="RHEA-COMP:10162"/>
        <dbReference type="Rhea" id="RHEA-COMP:10375"/>
        <dbReference type="ChEBI" id="CHEBI:33019"/>
        <dbReference type="ChEBI" id="CHEBI:57623"/>
        <dbReference type="ChEBI" id="CHEBI:74411"/>
        <dbReference type="ChEBI" id="CHEBI:74415"/>
        <dbReference type="EC" id="2.5.1.75"/>
    </reaction>
</comment>
<comment type="cofactor">
    <cofactor evidence="1">
        <name>Mg(2+)</name>
        <dbReference type="ChEBI" id="CHEBI:18420"/>
    </cofactor>
</comment>
<comment type="subunit">
    <text evidence="1">Monomer.</text>
</comment>
<comment type="similarity">
    <text evidence="1">Belongs to the IPP transferase family.</text>
</comment>
<accession>Q9PH56</accession>
<name>MIAA_XYLFA</name>
<evidence type="ECO:0000255" key="1">
    <source>
        <dbReference type="HAMAP-Rule" id="MF_00185"/>
    </source>
</evidence>
<reference key="1">
    <citation type="journal article" date="2000" name="Nature">
        <title>The genome sequence of the plant pathogen Xylella fastidiosa.</title>
        <authorList>
            <person name="Simpson A.J.G."/>
            <person name="Reinach F.C."/>
            <person name="Arruda P."/>
            <person name="Abreu F.A."/>
            <person name="Acencio M."/>
            <person name="Alvarenga R."/>
            <person name="Alves L.M.C."/>
            <person name="Araya J.E."/>
            <person name="Baia G.S."/>
            <person name="Baptista C.S."/>
            <person name="Barros M.H."/>
            <person name="Bonaccorsi E.D."/>
            <person name="Bordin S."/>
            <person name="Bove J.M."/>
            <person name="Briones M.R.S."/>
            <person name="Bueno M.R.P."/>
            <person name="Camargo A.A."/>
            <person name="Camargo L.E.A."/>
            <person name="Carraro D.M."/>
            <person name="Carrer H."/>
            <person name="Colauto N.B."/>
            <person name="Colombo C."/>
            <person name="Costa F.F."/>
            <person name="Costa M.C.R."/>
            <person name="Costa-Neto C.M."/>
            <person name="Coutinho L.L."/>
            <person name="Cristofani M."/>
            <person name="Dias-Neto E."/>
            <person name="Docena C."/>
            <person name="El-Dorry H."/>
            <person name="Facincani A.P."/>
            <person name="Ferreira A.J.S."/>
            <person name="Ferreira V.C.A."/>
            <person name="Ferro J.A."/>
            <person name="Fraga J.S."/>
            <person name="Franca S.C."/>
            <person name="Franco M.C."/>
            <person name="Frohme M."/>
            <person name="Furlan L.R."/>
            <person name="Garnier M."/>
            <person name="Goldman G.H."/>
            <person name="Goldman M.H.S."/>
            <person name="Gomes S.L."/>
            <person name="Gruber A."/>
            <person name="Ho P.L."/>
            <person name="Hoheisel J.D."/>
            <person name="Junqueira M.L."/>
            <person name="Kemper E.L."/>
            <person name="Kitajima J.P."/>
            <person name="Krieger J.E."/>
            <person name="Kuramae E.E."/>
            <person name="Laigret F."/>
            <person name="Lambais M.R."/>
            <person name="Leite L.C.C."/>
            <person name="Lemos E.G.M."/>
            <person name="Lemos M.V.F."/>
            <person name="Lopes S.A."/>
            <person name="Lopes C.R."/>
            <person name="Machado J.A."/>
            <person name="Machado M.A."/>
            <person name="Madeira A.M.B.N."/>
            <person name="Madeira H.M.F."/>
            <person name="Marino C.L."/>
            <person name="Marques M.V."/>
            <person name="Martins E.A.L."/>
            <person name="Martins E.M.F."/>
            <person name="Matsukuma A.Y."/>
            <person name="Menck C.F.M."/>
            <person name="Miracca E.C."/>
            <person name="Miyaki C.Y."/>
            <person name="Monteiro-Vitorello C.B."/>
            <person name="Moon D.H."/>
            <person name="Nagai M.A."/>
            <person name="Nascimento A.L.T.O."/>
            <person name="Netto L.E.S."/>
            <person name="Nhani A. Jr."/>
            <person name="Nobrega F.G."/>
            <person name="Nunes L.R."/>
            <person name="Oliveira M.A."/>
            <person name="de Oliveira M.C."/>
            <person name="de Oliveira R.C."/>
            <person name="Palmieri D.A."/>
            <person name="Paris A."/>
            <person name="Peixoto B.R."/>
            <person name="Pereira G.A.G."/>
            <person name="Pereira H.A. Jr."/>
            <person name="Pesquero J.B."/>
            <person name="Quaggio R.B."/>
            <person name="Roberto P.G."/>
            <person name="Rodrigues V."/>
            <person name="de Rosa A.J.M."/>
            <person name="de Rosa V.E. Jr."/>
            <person name="de Sa R.G."/>
            <person name="Santelli R.V."/>
            <person name="Sawasaki H.E."/>
            <person name="da Silva A.C.R."/>
            <person name="da Silva A.M."/>
            <person name="da Silva F.R."/>
            <person name="Silva W.A. Jr."/>
            <person name="da Silveira J.F."/>
            <person name="Silvestri M.L.Z."/>
            <person name="Siqueira W.J."/>
            <person name="de Souza A.A."/>
            <person name="de Souza A.P."/>
            <person name="Terenzi M.F."/>
            <person name="Truffi D."/>
            <person name="Tsai S.M."/>
            <person name="Tsuhako M.H."/>
            <person name="Vallada H."/>
            <person name="Van Sluys M.A."/>
            <person name="Verjovski-Almeida S."/>
            <person name="Vettore A.L."/>
            <person name="Zago M.A."/>
            <person name="Zatz M."/>
            <person name="Meidanis J."/>
            <person name="Setubal J.C."/>
        </authorList>
    </citation>
    <scope>NUCLEOTIDE SEQUENCE [LARGE SCALE GENOMIC DNA]</scope>
    <source>
        <strain>9a5c</strain>
    </source>
</reference>
<gene>
    <name evidence="1" type="primary">miaA</name>
    <name type="ordered locus">XF_0090</name>
</gene>
<proteinExistence type="inferred from homology"/>
<dbReference type="EC" id="2.5.1.75" evidence="1"/>
<dbReference type="EMBL" id="AE003849">
    <property type="protein sequence ID" value="AAF82903.1"/>
    <property type="molecule type" value="Genomic_DNA"/>
</dbReference>
<dbReference type="PIR" id="H82848">
    <property type="entry name" value="H82848"/>
</dbReference>
<dbReference type="RefSeq" id="WP_010892637.1">
    <property type="nucleotide sequence ID" value="NC_002488.3"/>
</dbReference>
<dbReference type="SMR" id="Q9PH56"/>
<dbReference type="STRING" id="160492.XF_0090"/>
<dbReference type="KEGG" id="xfa:XF_0090"/>
<dbReference type="eggNOG" id="COG0324">
    <property type="taxonomic scope" value="Bacteria"/>
</dbReference>
<dbReference type="HOGENOM" id="CLU_032616_0_0_6"/>
<dbReference type="Proteomes" id="UP000000812">
    <property type="component" value="Chromosome"/>
</dbReference>
<dbReference type="GO" id="GO:0005524">
    <property type="term" value="F:ATP binding"/>
    <property type="evidence" value="ECO:0007669"/>
    <property type="project" value="UniProtKB-UniRule"/>
</dbReference>
<dbReference type="GO" id="GO:0052381">
    <property type="term" value="F:tRNA dimethylallyltransferase activity"/>
    <property type="evidence" value="ECO:0007669"/>
    <property type="project" value="UniProtKB-UniRule"/>
</dbReference>
<dbReference type="GO" id="GO:0006400">
    <property type="term" value="P:tRNA modification"/>
    <property type="evidence" value="ECO:0007669"/>
    <property type="project" value="TreeGrafter"/>
</dbReference>
<dbReference type="FunFam" id="1.10.20.140:FF:000001">
    <property type="entry name" value="tRNA dimethylallyltransferase"/>
    <property type="match status" value="1"/>
</dbReference>
<dbReference type="Gene3D" id="1.10.20.140">
    <property type="match status" value="1"/>
</dbReference>
<dbReference type="Gene3D" id="3.40.50.300">
    <property type="entry name" value="P-loop containing nucleotide triphosphate hydrolases"/>
    <property type="match status" value="1"/>
</dbReference>
<dbReference type="HAMAP" id="MF_00185">
    <property type="entry name" value="IPP_trans"/>
    <property type="match status" value="1"/>
</dbReference>
<dbReference type="InterPro" id="IPR039657">
    <property type="entry name" value="Dimethylallyltransferase"/>
</dbReference>
<dbReference type="InterPro" id="IPR018022">
    <property type="entry name" value="IPT"/>
</dbReference>
<dbReference type="InterPro" id="IPR027417">
    <property type="entry name" value="P-loop_NTPase"/>
</dbReference>
<dbReference type="NCBIfam" id="TIGR00174">
    <property type="entry name" value="miaA"/>
    <property type="match status" value="1"/>
</dbReference>
<dbReference type="PANTHER" id="PTHR11088">
    <property type="entry name" value="TRNA DIMETHYLALLYLTRANSFERASE"/>
    <property type="match status" value="1"/>
</dbReference>
<dbReference type="PANTHER" id="PTHR11088:SF60">
    <property type="entry name" value="TRNA DIMETHYLALLYLTRANSFERASE"/>
    <property type="match status" value="1"/>
</dbReference>
<dbReference type="Pfam" id="PF01715">
    <property type="entry name" value="IPPT"/>
    <property type="match status" value="1"/>
</dbReference>
<dbReference type="SUPFAM" id="SSF52540">
    <property type="entry name" value="P-loop containing nucleoside triphosphate hydrolases"/>
    <property type="match status" value="1"/>
</dbReference>
<keyword id="KW-0067">ATP-binding</keyword>
<keyword id="KW-0460">Magnesium</keyword>
<keyword id="KW-0547">Nucleotide-binding</keyword>
<keyword id="KW-0808">Transferase</keyword>
<keyword id="KW-0819">tRNA processing</keyword>